<name>TUBE_BPSPR</name>
<accession>A0AAE9G628</accession>
<protein>
    <recommendedName>
        <fullName>Tail tube protein</fullName>
    </recommendedName>
</protein>
<reference key="1">
    <citation type="submission" date="2022-01" db="EMBL/GenBank/DDBJ databases">
        <authorList>
            <person name="Stokar-Avihail A."/>
        </authorList>
    </citation>
    <scope>NUCLEOTIDE SEQUENCE [GENOMIC DNA]</scope>
</reference>
<reference key="2">
    <citation type="journal article" date="2022" name="Nat. Microbiol.">
        <title>Multiple phage resistance systems inhibit infection via SIR2-dependent NAD+ depletion.</title>
        <authorList>
            <person name="Garb J."/>
            <person name="Lopatina A."/>
            <person name="Bernheim A."/>
            <person name="Zaremba M."/>
            <person name="Siksnys V."/>
            <person name="Melamed S."/>
            <person name="Leavitt A."/>
            <person name="Millman A."/>
            <person name="Amitai G."/>
            <person name="Sorek R."/>
        </authorList>
    </citation>
    <scope>INTERACTION WITH BACILLUS SUBTILIS DEFENSE-ASSOCIATED SIRTUIN 2/DSR2</scope>
</reference>
<reference evidence="19" key="3">
    <citation type="journal article" date="2024" name="Nat. Commun.">
        <title>The structural basis of the activation and inhibition of DSR2 NADase by phage proteins.</title>
        <authorList>
            <person name="Wang R."/>
            <person name="Xu Q."/>
            <person name="Wu Z."/>
            <person name="Li J."/>
            <person name="Guo H."/>
            <person name="Liao T."/>
            <person name="Shi Y."/>
            <person name="Yuan L."/>
            <person name="Gao H."/>
            <person name="Yang R."/>
            <person name="Shi Z."/>
            <person name="Li F."/>
        </authorList>
    </citation>
    <scope>STRUCTURE BY ELECTRON MICROSCOPY (3.14 ANGSTROMS) IN COMPLEX WITH BACILLUS SUBTILIS DSR2 AND NAD</scope>
    <scope>INTERACTION WITH BACILLUS SUBTILIS DEFENSE-ASSOCIATED SIRTUIN 2/DSR2</scope>
</reference>
<reference evidence="14 15 16" key="4">
    <citation type="journal article" date="2024" name="Nat. Commun.">
        <title>Structural basis for phage-mediated activation and repression of bacterial DSR2 anti-phage defense system.</title>
        <authorList>
            <person name="Zhang J.T."/>
            <person name="Liu X.Y."/>
            <person name="Li Z."/>
            <person name="Wei X.Y."/>
            <person name="Song X.Y."/>
            <person name="Cui N."/>
            <person name="Zhong J."/>
            <person name="Li H."/>
            <person name="Jia N."/>
        </authorList>
    </citation>
    <scope>STRUCTURE BY ELECTRON MICROSCOPY (3.62 ANGSTROMS) IN COMPLEX WITH BACILLUS SUBTILIS DSR2</scope>
    <scope>STRUCTURE BY ELECTRON MICROSCOPY (3.37 ANGSTROMS) IN COMPLEX WITH BACILLUS SUBTILIS DSR2 AND NAD</scope>
    <scope>INTERACTION WITH BACILLUS SUBTILIS DEFENSE-ASSOCIATED SIRTUIN 2/DSR2</scope>
</reference>
<reference evidence="13" key="5">
    <citation type="journal article" date="2024" name="Nat. Commun.">
        <title>Molecular basis of bacterial DSR2 anti-phage defense and viral immune evasion.</title>
        <authorList>
            <person name="Huang J."/>
            <person name="Zhu K."/>
            <person name="Gao Y."/>
            <person name="Ye F."/>
            <person name="Li Z."/>
            <person name="Ge Y."/>
            <person name="Liu S."/>
            <person name="Yang J."/>
            <person name="Gao A."/>
        </authorList>
    </citation>
    <scope>STRUCTURE BY ELECTRON MICROSCOPY (3.58 ANGSTROMS)</scope>
    <scope>INTERACTION WITH BACILLUS SUBTILIS DEFENSE-ASSOCIATED SIRTUIN 2/DSR2</scope>
</reference>
<reference evidence="11 12" key="6">
    <citation type="journal article" date="2024" name="Nat. Commun.">
        <title>Insights into the modulation of bacterial NADase activity by phage proteins.</title>
        <authorList>
            <person name="Yin H."/>
            <person name="Li X."/>
            <person name="Wang X."/>
            <person name="Zhang C."/>
            <person name="Gao J."/>
            <person name="Yu G."/>
            <person name="He Q."/>
            <person name="Yang J."/>
            <person name="Liu X."/>
            <person name="Wei Y."/>
            <person name="Li Z."/>
            <person name="Zhang H."/>
        </authorList>
    </citation>
    <scope>STRUCTURE BY ELECTRON MICROSCOPY (2.90 ANGSTROMS) IN COMPLEX WITH BACILLUS SUBTILIS DSR2</scope>
    <scope>INTERACTION WITH BACILLUS SUBTILIS DSR2</scope>
</reference>
<reference evidence="17 18 20" key="7">
    <citation type="journal article" date="2024" name="Int. J. Biol. Macromol.">
        <title>Structural insights into autoinhibition and activation of defense-associated sirtuin protein.</title>
        <authorList>
            <person name="Yang X."/>
            <person name="Wang Y."/>
            <person name="Zheng J."/>
        </authorList>
    </citation>
    <scope>STRUCTURE BY ELECTRON MICROSCOPY (3.26 ANGSTROMS) IN COMPLEX WITH BACILLUS SUBTILIS DSR2</scope>
    <scope>INTERACTION WITH BACILLUS SUBTILIS DEFENSE-ASSOCIATED SIRTUIN 2/DSR2</scope>
</reference>
<sequence>MKTVIQDTADVYFKRKSDGKLVFTAEAQTASFSQAISEEKLRGGIGNKPLYILKSEKEINLTVKNAFFDLEWLAMTQGETIQEETKVKVFDREHGLIVDDTNKVTLKGKPVSDVTFYNKKGLTYKIAVSTDGTYTIPTAFAAAKDKLTAVYQIEKVGRRLAIKASKFSERYEVEYRTIAYNPDTEEVYSDIYIQFPNVSPSGEFEMSLENGNALAPEIKFEALADTDTDEMAVVIEASRDENTAAPVEDTTGSTQSSDLGGTTE</sequence>
<feature type="chain" id="PRO_0000461781" description="Tail tube protein">
    <location>
        <begin position="1"/>
        <end position="264"/>
    </location>
</feature>
<feature type="region of interest" description="Interaction with Bacillus subtilis DSR2" evidence="2 7">
    <location>
        <begin position="1"/>
        <end position="76"/>
    </location>
</feature>
<feature type="region of interest" description="Disordered" evidence="1">
    <location>
        <begin position="237"/>
        <end position="264"/>
    </location>
</feature>
<feature type="compositionally biased region" description="Polar residues" evidence="1">
    <location>
        <begin position="250"/>
        <end position="264"/>
    </location>
</feature>
<feature type="site" description="Binding to the host DSR2" evidence="5">
    <location>
        <position position="13"/>
    </location>
</feature>
<feature type="site" description="Binding to the host DSR2" evidence="5">
    <location>
        <position position="23"/>
    </location>
</feature>
<feature type="site" description="Binding to the host DSR2" evidence="5">
    <location>
        <position position="72"/>
    </location>
</feature>
<feature type="site" description="Binding to the host DSR2" evidence="5">
    <location>
        <position position="73"/>
    </location>
</feature>
<feature type="site" description="Binding to the host DSR2" evidence="5">
    <location>
        <position position="173"/>
    </location>
</feature>
<feature type="site" description="Binding to the host DSR2" evidence="5">
    <location>
        <position position="200"/>
    </location>
</feature>
<feature type="site" description="Binding to the host DSR2" evidence="5">
    <location>
        <position position="218"/>
    </location>
</feature>
<proteinExistence type="evidence at protein level"/>
<organism evidence="9 10">
    <name type="scientific">Bacillus phage SPR</name>
    <name type="common">Bacteriophage SPR</name>
    <dbReference type="NCBI Taxonomy" id="10725"/>
    <lineage>
        <taxon>Viruses</taxon>
        <taxon>Duplodnaviria</taxon>
        <taxon>Heunggongvirae</taxon>
        <taxon>Uroviricota</taxon>
        <taxon>Caudoviricetes</taxon>
        <taxon>Spbetavirus</taxon>
    </lineage>
</organism>
<organismHost>
    <name type="scientific">Bacillus subtilis</name>
    <dbReference type="NCBI Taxonomy" id="1423"/>
</organismHost>
<comment type="subunit">
    <text evidence="2 3 4 5 6 7">Interacts (via N-terminus) as a monomer with Bacillus subtilis defense protein DSR2 (via C-terminus) in a 4:4 DSR2-Tube assembly; this interaction induces a conformation change of the tube protein and activates the NADase activity of DSR2 and leads to an abortive infection.</text>
</comment>
<comment type="subcellular location">
    <subcellularLocation>
        <location evidence="8">Virion</location>
    </subcellularLocation>
</comment>
<keyword id="KW-0002">3D-structure</keyword>
<keyword id="KW-0945">Host-virus interaction</keyword>
<keyword id="KW-1185">Reference proteome</keyword>
<keyword id="KW-1171">Viral genome ejection through host cell envelope</keyword>
<keyword id="KW-1162">Viral penetration into host cytoplasm</keyword>
<keyword id="KW-1227">Viral tail protein</keyword>
<keyword id="KW-1228">Viral tail tube protein</keyword>
<keyword id="KW-0946">Virion</keyword>
<keyword id="KW-1160">Virus entry into host cell</keyword>
<evidence type="ECO:0000256" key="1">
    <source>
        <dbReference type="SAM" id="MobiDB-lite"/>
    </source>
</evidence>
<evidence type="ECO:0000269" key="2">
    <source>
    </source>
</evidence>
<evidence type="ECO:0000269" key="3">
    <source>
    </source>
</evidence>
<evidence type="ECO:0000269" key="4">
    <source>
    </source>
</evidence>
<evidence type="ECO:0000269" key="5">
    <source>
    </source>
</evidence>
<evidence type="ECO:0000269" key="6">
    <source>
    </source>
</evidence>
<evidence type="ECO:0000269" key="7">
    <source>
    </source>
</evidence>
<evidence type="ECO:0000305" key="8"/>
<evidence type="ECO:0000312" key="9">
    <source>
        <dbReference type="EMBL" id="UNY48585.1"/>
    </source>
</evidence>
<evidence type="ECO:0000312" key="10">
    <source>
        <dbReference type="Proteomes" id="UP000831086"/>
    </source>
</evidence>
<evidence type="ECO:0007744" key="11">
    <source>
        <dbReference type="PDB" id="8K98"/>
    </source>
</evidence>
<evidence type="ECO:0007744" key="12">
    <source>
        <dbReference type="PDB" id="8WFN"/>
    </source>
</evidence>
<evidence type="ECO:0007744" key="13">
    <source>
        <dbReference type="PDB" id="8WKS"/>
    </source>
</evidence>
<evidence type="ECO:0007744" key="14">
    <source>
        <dbReference type="PDB" id="8WYA"/>
    </source>
</evidence>
<evidence type="ECO:0007744" key="15">
    <source>
        <dbReference type="PDB" id="8WYB"/>
    </source>
</evidence>
<evidence type="ECO:0007744" key="16">
    <source>
        <dbReference type="PDB" id="8WYC"/>
    </source>
</evidence>
<evidence type="ECO:0007744" key="17">
    <source>
        <dbReference type="PDB" id="8YLN"/>
    </source>
</evidence>
<evidence type="ECO:0007744" key="18">
    <source>
        <dbReference type="PDB" id="8Z18"/>
    </source>
</evidence>
<evidence type="ECO:0007744" key="19">
    <source>
        <dbReference type="PDB" id="8ZC9"/>
    </source>
</evidence>
<evidence type="ECO:0007744" key="20">
    <source>
        <dbReference type="PDB" id="8ZTR"/>
    </source>
</evidence>
<gene>
    <name evidence="9" type="ORF">spr_64</name>
</gene>
<dbReference type="EMBL" id="OM236515">
    <property type="protein sequence ID" value="UNY48585.1"/>
    <property type="molecule type" value="Genomic_DNA"/>
</dbReference>
<dbReference type="PDB" id="8K98">
    <property type="method" value="EM"/>
    <property type="resolution" value="2.90 A"/>
    <property type="chains" value="A/D=1-264"/>
</dbReference>
<dbReference type="PDB" id="8WFN">
    <property type="method" value="EM"/>
    <property type="resolution" value="4.48 A"/>
    <property type="chains" value="C/D/F/H=1-264"/>
</dbReference>
<dbReference type="PDB" id="8WKS">
    <property type="method" value="EM"/>
    <property type="resolution" value="3.58 A"/>
    <property type="chains" value="B/C/E/G=1-264"/>
</dbReference>
<dbReference type="PDB" id="8WYA">
    <property type="method" value="EM"/>
    <property type="resolution" value="3.62 A"/>
    <property type="chains" value="C/F=1-264"/>
</dbReference>
<dbReference type="PDB" id="8WYB">
    <property type="method" value="EM"/>
    <property type="resolution" value="3.37 A"/>
    <property type="chains" value="E/F/G/H=1-264"/>
</dbReference>
<dbReference type="PDB" id="8WYC">
    <property type="method" value="EM"/>
    <property type="resolution" value="3.00 A"/>
    <property type="chains" value="E/G=1-264"/>
</dbReference>
<dbReference type="PDB" id="8XFF">
    <property type="method" value="EM"/>
    <property type="resolution" value="3.16 A"/>
    <property type="chains" value="C=1-264"/>
</dbReference>
<dbReference type="PDB" id="8YLN">
    <property type="method" value="EM"/>
    <property type="resolution" value="3.53 A"/>
    <property type="chains" value="C/D=1-264"/>
</dbReference>
<dbReference type="PDB" id="8Z18">
    <property type="method" value="EM"/>
    <property type="resolution" value="3.94 A"/>
    <property type="chains" value="E/F/G/H=1-264"/>
</dbReference>
<dbReference type="PDB" id="8ZC9">
    <property type="method" value="EM"/>
    <property type="resolution" value="3.14 A"/>
    <property type="chains" value="C/F=1-264"/>
</dbReference>
<dbReference type="PDB" id="8ZTR">
    <property type="method" value="EM"/>
    <property type="resolution" value="3.26 A"/>
    <property type="chains" value="E/F=1-264"/>
</dbReference>
<dbReference type="PDBsum" id="8K98"/>
<dbReference type="PDBsum" id="8WFN"/>
<dbReference type="PDBsum" id="8WKS"/>
<dbReference type="PDBsum" id="8WYA"/>
<dbReference type="PDBsum" id="8WYB"/>
<dbReference type="PDBsum" id="8WYC"/>
<dbReference type="PDBsum" id="8XFF"/>
<dbReference type="PDBsum" id="8YLN"/>
<dbReference type="PDBsum" id="8Z18"/>
<dbReference type="PDBsum" id="8ZC9"/>
<dbReference type="PDBsum" id="8ZTR"/>
<dbReference type="EMDB" id="EMD-36980"/>
<dbReference type="EMDB" id="EMD-37497"/>
<dbReference type="SMR" id="A0AAE9G628"/>
<dbReference type="Proteomes" id="UP000831086">
    <property type="component" value="Segment"/>
</dbReference>
<dbReference type="GO" id="GO:0098026">
    <property type="term" value="C:virus tail, tube"/>
    <property type="evidence" value="ECO:0007669"/>
    <property type="project" value="UniProtKB-KW"/>
</dbReference>
<dbReference type="GO" id="GO:0046718">
    <property type="term" value="P:symbiont entry into host cell"/>
    <property type="evidence" value="ECO:0007669"/>
    <property type="project" value="UniProtKB-KW"/>
</dbReference>